<name>HEM6_ECOSE</name>
<protein>
    <recommendedName>
        <fullName evidence="1">Oxygen-dependent coproporphyrinogen-III oxidase</fullName>
        <shortName evidence="1">CPO</shortName>
        <shortName evidence="1">Coprogen oxidase</shortName>
        <shortName evidence="1">Coproporphyrinogenase</shortName>
        <ecNumber evidence="1">1.3.3.3</ecNumber>
    </recommendedName>
</protein>
<accession>B6I512</accession>
<proteinExistence type="inferred from homology"/>
<dbReference type="EC" id="1.3.3.3" evidence="1"/>
<dbReference type="EMBL" id="AP009240">
    <property type="protein sequence ID" value="BAG78250.1"/>
    <property type="molecule type" value="Genomic_DNA"/>
</dbReference>
<dbReference type="RefSeq" id="WP_000801380.1">
    <property type="nucleotide sequence ID" value="NC_011415.1"/>
</dbReference>
<dbReference type="SMR" id="B6I512"/>
<dbReference type="KEGG" id="ecy:ECSE_2726"/>
<dbReference type="HOGENOM" id="CLU_026169_0_1_6"/>
<dbReference type="UniPathway" id="UPA00251">
    <property type="reaction ID" value="UER00322"/>
</dbReference>
<dbReference type="Proteomes" id="UP000008199">
    <property type="component" value="Chromosome"/>
</dbReference>
<dbReference type="GO" id="GO:0005737">
    <property type="term" value="C:cytoplasm"/>
    <property type="evidence" value="ECO:0007669"/>
    <property type="project" value="UniProtKB-SubCell"/>
</dbReference>
<dbReference type="GO" id="GO:0004109">
    <property type="term" value="F:coproporphyrinogen oxidase activity"/>
    <property type="evidence" value="ECO:0007669"/>
    <property type="project" value="UniProtKB-UniRule"/>
</dbReference>
<dbReference type="GO" id="GO:0030145">
    <property type="term" value="F:manganese ion binding"/>
    <property type="evidence" value="ECO:0007669"/>
    <property type="project" value="UniProtKB-UniRule"/>
</dbReference>
<dbReference type="GO" id="GO:0042803">
    <property type="term" value="F:protein homodimerization activity"/>
    <property type="evidence" value="ECO:0000250"/>
    <property type="project" value="UniProtKB"/>
</dbReference>
<dbReference type="GO" id="GO:0006782">
    <property type="term" value="P:protoporphyrinogen IX biosynthetic process"/>
    <property type="evidence" value="ECO:0007669"/>
    <property type="project" value="UniProtKB-UniRule"/>
</dbReference>
<dbReference type="FunFam" id="3.40.1500.10:FF:000001">
    <property type="entry name" value="Oxygen-dependent coproporphyrinogen-III oxidase"/>
    <property type="match status" value="1"/>
</dbReference>
<dbReference type="Gene3D" id="3.40.1500.10">
    <property type="entry name" value="Coproporphyrinogen III oxidase, aerobic"/>
    <property type="match status" value="1"/>
</dbReference>
<dbReference type="HAMAP" id="MF_00333">
    <property type="entry name" value="Coprogen_oxidas"/>
    <property type="match status" value="1"/>
</dbReference>
<dbReference type="InterPro" id="IPR001260">
    <property type="entry name" value="Coprogen_oxidase_aer"/>
</dbReference>
<dbReference type="InterPro" id="IPR036406">
    <property type="entry name" value="Coprogen_oxidase_aer_sf"/>
</dbReference>
<dbReference type="InterPro" id="IPR018375">
    <property type="entry name" value="Coprogen_oxidase_CS"/>
</dbReference>
<dbReference type="NCBIfam" id="NF003727">
    <property type="entry name" value="PRK05330.1"/>
    <property type="match status" value="1"/>
</dbReference>
<dbReference type="PANTHER" id="PTHR10755">
    <property type="entry name" value="COPROPORPHYRINOGEN III OXIDASE, MITOCHONDRIAL"/>
    <property type="match status" value="1"/>
</dbReference>
<dbReference type="PANTHER" id="PTHR10755:SF0">
    <property type="entry name" value="OXYGEN-DEPENDENT COPROPORPHYRINOGEN-III OXIDASE, MITOCHONDRIAL"/>
    <property type="match status" value="1"/>
</dbReference>
<dbReference type="Pfam" id="PF01218">
    <property type="entry name" value="Coprogen_oxidas"/>
    <property type="match status" value="1"/>
</dbReference>
<dbReference type="PIRSF" id="PIRSF000166">
    <property type="entry name" value="Coproporphyri_ox"/>
    <property type="match status" value="1"/>
</dbReference>
<dbReference type="PRINTS" id="PR00073">
    <property type="entry name" value="COPRGNOXDASE"/>
</dbReference>
<dbReference type="SUPFAM" id="SSF102886">
    <property type="entry name" value="Coproporphyrinogen III oxidase"/>
    <property type="match status" value="1"/>
</dbReference>
<dbReference type="PROSITE" id="PS01021">
    <property type="entry name" value="COPROGEN_OXIDASE"/>
    <property type="match status" value="1"/>
</dbReference>
<gene>
    <name evidence="1" type="primary">hemF</name>
    <name type="ordered locus">ECSE_2726</name>
</gene>
<organism>
    <name type="scientific">Escherichia coli (strain SE11)</name>
    <dbReference type="NCBI Taxonomy" id="409438"/>
    <lineage>
        <taxon>Bacteria</taxon>
        <taxon>Pseudomonadati</taxon>
        <taxon>Pseudomonadota</taxon>
        <taxon>Gammaproteobacteria</taxon>
        <taxon>Enterobacterales</taxon>
        <taxon>Enterobacteriaceae</taxon>
        <taxon>Escherichia</taxon>
    </lineage>
</organism>
<keyword id="KW-0963">Cytoplasm</keyword>
<keyword id="KW-0350">Heme biosynthesis</keyword>
<keyword id="KW-0464">Manganese</keyword>
<keyword id="KW-0479">Metal-binding</keyword>
<keyword id="KW-0560">Oxidoreductase</keyword>
<keyword id="KW-0627">Porphyrin biosynthesis</keyword>
<evidence type="ECO:0000255" key="1">
    <source>
        <dbReference type="HAMAP-Rule" id="MF_00333"/>
    </source>
</evidence>
<feature type="chain" id="PRO_1000119801" description="Oxygen-dependent coproporphyrinogen-III oxidase">
    <location>
        <begin position="1"/>
        <end position="299"/>
    </location>
</feature>
<feature type="region of interest" description="Important for dimerization" evidence="1">
    <location>
        <begin position="240"/>
        <end position="275"/>
    </location>
</feature>
<feature type="active site" description="Proton donor" evidence="1">
    <location>
        <position position="106"/>
    </location>
</feature>
<feature type="binding site" evidence="1">
    <location>
        <position position="92"/>
    </location>
    <ligand>
        <name>substrate</name>
    </ligand>
</feature>
<feature type="binding site" evidence="1">
    <location>
        <position position="96"/>
    </location>
    <ligand>
        <name>Mn(2+)</name>
        <dbReference type="ChEBI" id="CHEBI:29035"/>
    </ligand>
</feature>
<feature type="binding site" evidence="1">
    <location>
        <position position="106"/>
    </location>
    <ligand>
        <name>Mn(2+)</name>
        <dbReference type="ChEBI" id="CHEBI:29035"/>
    </ligand>
</feature>
<feature type="binding site" evidence="1">
    <location>
        <begin position="108"/>
        <end position="110"/>
    </location>
    <ligand>
        <name>substrate</name>
    </ligand>
</feature>
<feature type="binding site" evidence="1">
    <location>
        <position position="145"/>
    </location>
    <ligand>
        <name>Mn(2+)</name>
        <dbReference type="ChEBI" id="CHEBI:29035"/>
    </ligand>
</feature>
<feature type="binding site" evidence="1">
    <location>
        <position position="175"/>
    </location>
    <ligand>
        <name>Mn(2+)</name>
        <dbReference type="ChEBI" id="CHEBI:29035"/>
    </ligand>
</feature>
<feature type="binding site" evidence="1">
    <location>
        <begin position="258"/>
        <end position="260"/>
    </location>
    <ligand>
        <name>substrate</name>
    </ligand>
</feature>
<feature type="site" description="Important for dimerization" evidence="1">
    <location>
        <position position="175"/>
    </location>
</feature>
<reference key="1">
    <citation type="journal article" date="2008" name="DNA Res.">
        <title>Complete genome sequence and comparative analysis of the wild-type commensal Escherichia coli strain SE11 isolated from a healthy adult.</title>
        <authorList>
            <person name="Oshima K."/>
            <person name="Toh H."/>
            <person name="Ogura Y."/>
            <person name="Sasamoto H."/>
            <person name="Morita H."/>
            <person name="Park S.-H."/>
            <person name="Ooka T."/>
            <person name="Iyoda S."/>
            <person name="Taylor T.D."/>
            <person name="Hayashi T."/>
            <person name="Itoh K."/>
            <person name="Hattori M."/>
        </authorList>
    </citation>
    <scope>NUCLEOTIDE SEQUENCE [LARGE SCALE GENOMIC DNA]</scope>
    <source>
        <strain>SE11</strain>
    </source>
</reference>
<sequence length="299" mass="34272">MKPDAHQVKQFLLNLQDTICQQLTAVDGAEFVEDSWQREGGGGGRSRVLRNGGVFEQAGVNFSHVHGEAMPASATAHRPELAGRSFEAMGVSLVVHPHNPYVPTSHANVRFFIAEKPGAEPVWWFGGGFDLTPFYGFEEDAIHWHRTARDLCLPFGEDVYLRYKKWCDDYFYLKHRNEQRGIGGLFFDDLNTPDFDHCFAFMQAVGKGYTDAYLPIVERRKAMAYGERERNFQLYRRGRYVEFNLVWDRGTLFGLQTGGRTESILMSMPPLVRWEYDYHPEAGSPEAALSEFIKVRDWV</sequence>
<comment type="function">
    <text evidence="1">Involved in the heme biosynthesis. Catalyzes the aerobic oxidative decarboxylation of propionate groups of rings A and B of coproporphyrinogen-III to yield the vinyl groups in protoporphyrinogen-IX.</text>
</comment>
<comment type="catalytic activity">
    <reaction evidence="1">
        <text>coproporphyrinogen III + O2 + 2 H(+) = protoporphyrinogen IX + 2 CO2 + 2 H2O</text>
        <dbReference type="Rhea" id="RHEA:18257"/>
        <dbReference type="ChEBI" id="CHEBI:15377"/>
        <dbReference type="ChEBI" id="CHEBI:15378"/>
        <dbReference type="ChEBI" id="CHEBI:15379"/>
        <dbReference type="ChEBI" id="CHEBI:16526"/>
        <dbReference type="ChEBI" id="CHEBI:57307"/>
        <dbReference type="ChEBI" id="CHEBI:57309"/>
        <dbReference type="EC" id="1.3.3.3"/>
    </reaction>
</comment>
<comment type="cofactor">
    <cofactor evidence="1">
        <name>Mn(2+)</name>
        <dbReference type="ChEBI" id="CHEBI:29035"/>
    </cofactor>
</comment>
<comment type="pathway">
    <text evidence="1">Porphyrin-containing compound metabolism; protoporphyrin-IX biosynthesis; protoporphyrinogen-IX from coproporphyrinogen-III (O2 route): step 1/1.</text>
</comment>
<comment type="subunit">
    <text evidence="1">Homodimer.</text>
</comment>
<comment type="subcellular location">
    <subcellularLocation>
        <location evidence="1">Cytoplasm</location>
    </subcellularLocation>
</comment>
<comment type="similarity">
    <text evidence="1">Belongs to the aerobic coproporphyrinogen-III oxidase family.</text>
</comment>